<organism>
    <name type="scientific">Corynebacterium glutamicum (strain R)</name>
    <dbReference type="NCBI Taxonomy" id="340322"/>
    <lineage>
        <taxon>Bacteria</taxon>
        <taxon>Bacillati</taxon>
        <taxon>Actinomycetota</taxon>
        <taxon>Actinomycetes</taxon>
        <taxon>Mycobacteriales</taxon>
        <taxon>Corynebacteriaceae</taxon>
        <taxon>Corynebacterium</taxon>
    </lineage>
</organism>
<comment type="similarity">
    <text evidence="1">Belongs to the DNA glycosylase MPG family.</text>
</comment>
<sequence length="210" mass="22694">MYALVTLAWWDFRTVRPRIGAMPIDFLQPAEIVAPQLLGCTLTHGGVGIRITEVEAYLDSTDEAAHTYRGKTPRNAAMFGPGGHMYVYISYGIHRAGNIVCGPEGTGQGVLLRAGEVVSGESIAQNRRGERIPHARLAQGPGNFGQALGLEVSDNHASVFGPSFLISDGVETPEIVRGPRIGISKNTEALLRFWIPNDPTVSGRRGYPKE</sequence>
<keyword id="KW-0227">DNA damage</keyword>
<keyword id="KW-0234">DNA repair</keyword>
<keyword id="KW-0378">Hydrolase</keyword>
<proteinExistence type="inferred from homology"/>
<protein>
    <recommendedName>
        <fullName evidence="1">Putative 3-methyladenine DNA glycosylase</fullName>
        <ecNumber evidence="1">3.2.2.-</ecNumber>
    </recommendedName>
</protein>
<accession>A4QAA8</accession>
<evidence type="ECO:0000255" key="1">
    <source>
        <dbReference type="HAMAP-Rule" id="MF_00527"/>
    </source>
</evidence>
<name>3MGH_CORGB</name>
<gene>
    <name type="ordered locus">cgR_0192</name>
</gene>
<reference key="1">
    <citation type="journal article" date="2007" name="Microbiology">
        <title>Comparative analysis of the Corynebacterium glutamicum group and complete genome sequence of strain R.</title>
        <authorList>
            <person name="Yukawa H."/>
            <person name="Omumasaba C.A."/>
            <person name="Nonaka H."/>
            <person name="Kos P."/>
            <person name="Okai N."/>
            <person name="Suzuki N."/>
            <person name="Suda M."/>
            <person name="Tsuge Y."/>
            <person name="Watanabe J."/>
            <person name="Ikeda Y."/>
            <person name="Vertes A.A."/>
            <person name="Inui M."/>
        </authorList>
    </citation>
    <scope>NUCLEOTIDE SEQUENCE [LARGE SCALE GENOMIC DNA]</scope>
    <source>
        <strain>R</strain>
    </source>
</reference>
<dbReference type="EC" id="3.2.2.-" evidence="1"/>
<dbReference type="EMBL" id="AP009044">
    <property type="protein sequence ID" value="BAF53155.1"/>
    <property type="molecule type" value="Genomic_DNA"/>
</dbReference>
<dbReference type="SMR" id="A4QAA8"/>
<dbReference type="KEGG" id="cgt:cgR_0192"/>
<dbReference type="HOGENOM" id="CLU_060471_3_1_11"/>
<dbReference type="PhylomeDB" id="A4QAA8"/>
<dbReference type="Proteomes" id="UP000006698">
    <property type="component" value="Chromosome"/>
</dbReference>
<dbReference type="GO" id="GO:0003905">
    <property type="term" value="F:alkylbase DNA N-glycosylase activity"/>
    <property type="evidence" value="ECO:0007669"/>
    <property type="project" value="InterPro"/>
</dbReference>
<dbReference type="GO" id="GO:0003677">
    <property type="term" value="F:DNA binding"/>
    <property type="evidence" value="ECO:0007669"/>
    <property type="project" value="InterPro"/>
</dbReference>
<dbReference type="GO" id="GO:0006284">
    <property type="term" value="P:base-excision repair"/>
    <property type="evidence" value="ECO:0007669"/>
    <property type="project" value="InterPro"/>
</dbReference>
<dbReference type="CDD" id="cd00540">
    <property type="entry name" value="AAG"/>
    <property type="match status" value="1"/>
</dbReference>
<dbReference type="Gene3D" id="3.10.300.10">
    <property type="entry name" value="Methylpurine-DNA glycosylase (MPG)"/>
    <property type="match status" value="1"/>
</dbReference>
<dbReference type="HAMAP" id="MF_00527">
    <property type="entry name" value="3MGH"/>
    <property type="match status" value="1"/>
</dbReference>
<dbReference type="InterPro" id="IPR011034">
    <property type="entry name" value="Formyl_transferase-like_C_sf"/>
</dbReference>
<dbReference type="InterPro" id="IPR003180">
    <property type="entry name" value="MPG"/>
</dbReference>
<dbReference type="InterPro" id="IPR036995">
    <property type="entry name" value="MPG_sf"/>
</dbReference>
<dbReference type="NCBIfam" id="TIGR00567">
    <property type="entry name" value="3mg"/>
    <property type="match status" value="1"/>
</dbReference>
<dbReference type="NCBIfam" id="NF002003">
    <property type="entry name" value="PRK00802.1-3"/>
    <property type="match status" value="1"/>
</dbReference>
<dbReference type="PANTHER" id="PTHR10429">
    <property type="entry name" value="DNA-3-METHYLADENINE GLYCOSYLASE"/>
    <property type="match status" value="1"/>
</dbReference>
<dbReference type="PANTHER" id="PTHR10429:SF0">
    <property type="entry name" value="DNA-3-METHYLADENINE GLYCOSYLASE"/>
    <property type="match status" value="1"/>
</dbReference>
<dbReference type="Pfam" id="PF02245">
    <property type="entry name" value="Pur_DNA_glyco"/>
    <property type="match status" value="1"/>
</dbReference>
<dbReference type="SUPFAM" id="SSF50486">
    <property type="entry name" value="FMT C-terminal domain-like"/>
    <property type="match status" value="1"/>
</dbReference>
<feature type="chain" id="PRO_1000146264" description="Putative 3-methyladenine DNA glycosylase">
    <location>
        <begin position="1"/>
        <end position="210"/>
    </location>
</feature>